<protein>
    <recommendedName>
        <fullName evidence="1">Photosystem II reaction center protein J</fullName>
        <shortName evidence="1">PSII-J</shortName>
    </recommendedName>
</protein>
<reference key="1">
    <citation type="journal article" date="2015" name="Proc. Natl. Acad. Sci. U.S.A.">
        <title>Trichodesmium genome maintains abundant, widespread noncoding DNA in situ, despite oligotrophic lifestyle.</title>
        <authorList>
            <person name="Walworth N."/>
            <person name="Pfreundt U."/>
            <person name="Nelson W.C."/>
            <person name="Mincer T."/>
            <person name="Heidelberg J.F."/>
            <person name="Fu F."/>
            <person name="Waterbury J.B."/>
            <person name="Glavina del Rio T."/>
            <person name="Goodwin L."/>
            <person name="Kyrpides N.C."/>
            <person name="Land M.L."/>
            <person name="Woyke T."/>
            <person name="Hutchins D.A."/>
            <person name="Hess W.R."/>
            <person name="Webb E.A."/>
        </authorList>
    </citation>
    <scope>NUCLEOTIDE SEQUENCE [LARGE SCALE GENOMIC DNA]</scope>
    <source>
        <strain>IMS101</strain>
    </source>
</reference>
<comment type="function">
    <text evidence="1">One of the components of the core complex of photosystem II (PSII). PSII is a light-driven water:plastoquinone oxidoreductase that uses light energy to abstract electrons from H(2)O, generating O(2) and a proton gradient subsequently used for ATP formation. It consists of a core antenna complex that captures photons, and an electron transfer chain that converts photonic excitation into a charge separation.</text>
</comment>
<comment type="subunit">
    <text evidence="1">PSII is composed of 1 copy each of membrane proteins PsbA, PsbB, PsbC, PsbD, PsbE, PsbF, PsbH, PsbI, PsbJ, PsbK, PsbL, PsbM, PsbT, PsbX, PsbY, PsbZ, Psb30/Ycf12, peripheral proteins PsbO, CyanoQ (PsbQ), PsbU, PsbV and a large number of cofactors. It forms dimeric complexes.</text>
</comment>
<comment type="subcellular location">
    <subcellularLocation>
        <location evidence="1">Cellular thylakoid membrane</location>
        <topology evidence="1">Single-pass membrane protein</topology>
    </subcellularLocation>
</comment>
<comment type="similarity">
    <text evidence="1">Belongs to the PsbJ family.</text>
</comment>
<proteinExistence type="inferred from homology"/>
<keyword id="KW-0472">Membrane</keyword>
<keyword id="KW-0602">Photosynthesis</keyword>
<keyword id="KW-0604">Photosystem II</keyword>
<keyword id="KW-0674">Reaction center</keyword>
<keyword id="KW-0793">Thylakoid</keyword>
<keyword id="KW-0812">Transmembrane</keyword>
<keyword id="KW-1133">Transmembrane helix</keyword>
<organism>
    <name type="scientific">Trichodesmium erythraeum (strain IMS101)</name>
    <dbReference type="NCBI Taxonomy" id="203124"/>
    <lineage>
        <taxon>Bacteria</taxon>
        <taxon>Bacillati</taxon>
        <taxon>Cyanobacteriota</taxon>
        <taxon>Cyanophyceae</taxon>
        <taxon>Oscillatoriophycideae</taxon>
        <taxon>Oscillatoriales</taxon>
        <taxon>Microcoleaceae</taxon>
        <taxon>Trichodesmium</taxon>
    </lineage>
</organism>
<evidence type="ECO:0000255" key="1">
    <source>
        <dbReference type="HAMAP-Rule" id="MF_01305"/>
    </source>
</evidence>
<name>PSBJ_TRIEI</name>
<gene>
    <name evidence="1" type="primary">psbJ</name>
    <name type="ordered locus">Tery_3507</name>
</gene>
<feature type="chain" id="PRO_0000292242" description="Photosystem II reaction center protein J">
    <location>
        <begin position="1"/>
        <end position="40"/>
    </location>
</feature>
<feature type="transmembrane region" description="Helical" evidence="1">
    <location>
        <begin position="8"/>
        <end position="28"/>
    </location>
</feature>
<dbReference type="EMBL" id="CP000393">
    <property type="protein sequence ID" value="ABG52597.1"/>
    <property type="molecule type" value="Genomic_DNA"/>
</dbReference>
<dbReference type="RefSeq" id="WP_011612939.1">
    <property type="nucleotide sequence ID" value="NC_008312.1"/>
</dbReference>
<dbReference type="SMR" id="Q10YS7"/>
<dbReference type="STRING" id="203124.Tery_3507"/>
<dbReference type="KEGG" id="ter:Tery_3507"/>
<dbReference type="eggNOG" id="ENOG5033ABP">
    <property type="taxonomic scope" value="Bacteria"/>
</dbReference>
<dbReference type="HOGENOM" id="CLU_215151_0_0_3"/>
<dbReference type="GO" id="GO:0009539">
    <property type="term" value="C:photosystem II reaction center"/>
    <property type="evidence" value="ECO:0007669"/>
    <property type="project" value="InterPro"/>
</dbReference>
<dbReference type="GO" id="GO:0031676">
    <property type="term" value="C:plasma membrane-derived thylakoid membrane"/>
    <property type="evidence" value="ECO:0007669"/>
    <property type="project" value="UniProtKB-SubCell"/>
</dbReference>
<dbReference type="GO" id="GO:0015979">
    <property type="term" value="P:photosynthesis"/>
    <property type="evidence" value="ECO:0007669"/>
    <property type="project" value="UniProtKB-UniRule"/>
</dbReference>
<dbReference type="Gene3D" id="6.10.250.2070">
    <property type="match status" value="1"/>
</dbReference>
<dbReference type="HAMAP" id="MF_01305">
    <property type="entry name" value="PSII_PsbJ"/>
    <property type="match status" value="1"/>
</dbReference>
<dbReference type="InterPro" id="IPR002682">
    <property type="entry name" value="PSII_PsbJ"/>
</dbReference>
<dbReference type="InterPro" id="IPR037267">
    <property type="entry name" value="PSII_PsbJ_sf"/>
</dbReference>
<dbReference type="NCBIfam" id="NF002722">
    <property type="entry name" value="PRK02565.1"/>
    <property type="match status" value="1"/>
</dbReference>
<dbReference type="PANTHER" id="PTHR34812">
    <property type="entry name" value="PHOTOSYSTEM II REACTION CENTER PROTEIN J"/>
    <property type="match status" value="1"/>
</dbReference>
<dbReference type="PANTHER" id="PTHR34812:SF3">
    <property type="entry name" value="PHOTOSYSTEM II REACTION CENTER PROTEIN J"/>
    <property type="match status" value="1"/>
</dbReference>
<dbReference type="Pfam" id="PF01788">
    <property type="entry name" value="PsbJ"/>
    <property type="match status" value="1"/>
</dbReference>
<dbReference type="SUPFAM" id="SSF161021">
    <property type="entry name" value="Photosystem II reaction center protein J, PsbJ"/>
    <property type="match status" value="1"/>
</dbReference>
<sequence length="40" mass="4143">MMSEPGRIPLWLVALVAGTGVLVVVGLFFYGSYVGVGSSL</sequence>
<accession>Q10YS7</accession>